<keyword id="KW-0456">Lyase</keyword>
<keyword id="KW-0460">Magnesium</keyword>
<keyword id="KW-0479">Metal-binding</keyword>
<protein>
    <recommendedName>
        <fullName evidence="3">Sesquiterpene synthase MBR_09977</fullName>
        <ecNumber evidence="2">4.2.3.163</ecNumber>
        <ecNumber evidence="2">4.2.3.171</ecNumber>
    </recommendedName>
    <alternativeName>
        <fullName evidence="3">Bacterial terpene synthase-like protein MBR_09977</fullName>
        <shortName evidence="3">BTPSL</shortName>
    </alternativeName>
</protein>
<comment type="function">
    <text evidence="2">Terpene synthase that catalyzes the conversion of (2E,6E)-farnesyl diphosphate (FPP) into sesquiterpenes which are important for fungi-environment interactions (PubMed:31239482). Produces a mixture consisting of 8 sesquiterpenes including corvol ethers A and B, as well as traces of epizonarene, gamma-cadinene, delta-cadinene, alpha-cadinene, alpha-cadinol, and an unidentified sesquiterpene (PubMed:31239482). The major product is corvol ether A (PubMed:31239482).</text>
</comment>
<comment type="catalytic activity">
    <reaction evidence="2">
        <text>(2E,6E)-farnesyl diphosphate + H2O = (+)-corvol ether B + diphosphate</text>
        <dbReference type="Rhea" id="RHEA:53644"/>
        <dbReference type="ChEBI" id="CHEBI:15377"/>
        <dbReference type="ChEBI" id="CHEBI:33019"/>
        <dbReference type="ChEBI" id="CHEBI:137536"/>
        <dbReference type="ChEBI" id="CHEBI:175763"/>
        <dbReference type="EC" id="4.2.3.163"/>
    </reaction>
    <physiologicalReaction direction="left-to-right" evidence="2">
        <dbReference type="Rhea" id="RHEA:53645"/>
    </physiologicalReaction>
</comment>
<comment type="catalytic activity">
    <reaction evidence="2">
        <text>(2E,6E)-farnesyl diphosphate + H2O = (+)-corvol ether A + diphosphate</text>
        <dbReference type="Rhea" id="RHEA:53648"/>
        <dbReference type="ChEBI" id="CHEBI:15377"/>
        <dbReference type="ChEBI" id="CHEBI:33019"/>
        <dbReference type="ChEBI" id="CHEBI:137535"/>
        <dbReference type="ChEBI" id="CHEBI:175763"/>
        <dbReference type="EC" id="4.2.3.171"/>
    </reaction>
    <physiologicalReaction direction="left-to-right" evidence="2">
        <dbReference type="Rhea" id="RHEA:53649"/>
    </physiologicalReaction>
</comment>
<comment type="cofactor">
    <cofactor evidence="1">
        <name>Mg(2+)</name>
        <dbReference type="ChEBI" id="CHEBI:18420"/>
    </cofactor>
    <text evidence="1">Binds 3 Mg(2+) ions per subunit.</text>
</comment>
<comment type="domain">
    <text evidence="1">The Asp-Asp-Xaa-Xaa-Xaa-Asp (DDXXXD) motif is important for the catalytic activity, presumably through binding to Mg(2+).</text>
</comment>
<comment type="similarity">
    <text evidence="4">Belongs to the terpene synthase family.</text>
</comment>
<feature type="chain" id="PRO_0000451049" description="Sesquiterpene synthase MBR_09977">
    <location>
        <begin position="1"/>
        <end position="342"/>
    </location>
</feature>
<feature type="short sequence motif" description="DDXXXD motif" evidence="1">
    <location>
        <begin position="91"/>
        <end position="96"/>
    </location>
</feature>
<feature type="binding site" evidence="1">
    <location>
        <position position="91"/>
    </location>
    <ligand>
        <name>Mg(2+)</name>
        <dbReference type="ChEBI" id="CHEBI:18420"/>
        <label>1</label>
    </ligand>
</feature>
<feature type="binding site" evidence="1">
    <location>
        <position position="96"/>
    </location>
    <ligand>
        <name>Mg(2+)</name>
        <dbReference type="ChEBI" id="CHEBI:18420"/>
        <label>1</label>
    </ligand>
</feature>
<feature type="binding site" evidence="1">
    <location>
        <position position="96"/>
    </location>
    <ligand>
        <name>Mg(2+)</name>
        <dbReference type="ChEBI" id="CHEBI:18420"/>
        <label>2</label>
    </ligand>
</feature>
<feature type="binding site" evidence="1">
    <location>
        <position position="184"/>
    </location>
    <ligand>
        <name>substrate</name>
    </ligand>
</feature>
<feature type="binding site" evidence="1">
    <location>
        <position position="230"/>
    </location>
    <ligand>
        <name>Mg(2+)</name>
        <dbReference type="ChEBI" id="CHEBI:18420"/>
        <label>3</label>
    </ligand>
</feature>
<feature type="binding site" evidence="1">
    <location>
        <position position="234"/>
    </location>
    <ligand>
        <name>Mg(2+)</name>
        <dbReference type="ChEBI" id="CHEBI:18420"/>
        <label>3</label>
    </ligand>
</feature>
<feature type="binding site" evidence="1">
    <location>
        <position position="238"/>
    </location>
    <ligand>
        <name>Mg(2+)</name>
        <dbReference type="ChEBI" id="CHEBI:18420"/>
        <label>3</label>
    </ligand>
</feature>
<feature type="site" description="Plays a critical role in the stabilization of intermediate cation" evidence="1">
    <location>
        <position position="88"/>
    </location>
</feature>
<feature type="site" description="Plays a critical role for substrate recognition" evidence="1">
    <location>
        <position position="92"/>
    </location>
</feature>
<dbReference type="EC" id="4.2.3.163" evidence="2"/>
<dbReference type="EC" id="4.2.3.171" evidence="2"/>
<dbReference type="EMBL" id="AZNG01000027">
    <property type="protein sequence ID" value="KID63054.1"/>
    <property type="molecule type" value="Genomic_DNA"/>
</dbReference>
<dbReference type="SMR" id="A0A0B4G3Q7"/>
<dbReference type="GeneID" id="26247247"/>
<dbReference type="KEGG" id="mbrn:26247247"/>
<dbReference type="HOGENOM" id="CLU_042538_4_2_1"/>
<dbReference type="GO" id="GO:0046872">
    <property type="term" value="F:metal ion binding"/>
    <property type="evidence" value="ECO:0007669"/>
    <property type="project" value="UniProtKB-KW"/>
</dbReference>
<dbReference type="GO" id="GO:0010333">
    <property type="term" value="F:terpene synthase activity"/>
    <property type="evidence" value="ECO:0007669"/>
    <property type="project" value="InterPro"/>
</dbReference>
<dbReference type="GO" id="GO:0008299">
    <property type="term" value="P:isoprenoid biosynthetic process"/>
    <property type="evidence" value="ECO:0007669"/>
    <property type="project" value="UniProtKB-ARBA"/>
</dbReference>
<dbReference type="Gene3D" id="1.10.600.10">
    <property type="entry name" value="Farnesyl Diphosphate Synthase"/>
    <property type="match status" value="1"/>
</dbReference>
<dbReference type="InterPro" id="IPR008949">
    <property type="entry name" value="Isoprenoid_synthase_dom_sf"/>
</dbReference>
<dbReference type="InterPro" id="IPR034686">
    <property type="entry name" value="Terpene_cyclase-like_2"/>
</dbReference>
<dbReference type="PANTHER" id="PTHR35201:SF4">
    <property type="entry name" value="BETA-PINACENE SYNTHASE-RELATED"/>
    <property type="match status" value="1"/>
</dbReference>
<dbReference type="PANTHER" id="PTHR35201">
    <property type="entry name" value="TERPENE SYNTHASE"/>
    <property type="match status" value="1"/>
</dbReference>
<dbReference type="Pfam" id="PF19086">
    <property type="entry name" value="Terpene_syn_C_2"/>
    <property type="match status" value="1"/>
</dbReference>
<dbReference type="SFLD" id="SFLDS00005">
    <property type="entry name" value="Isoprenoid_Synthase_Type_I"/>
    <property type="match status" value="1"/>
</dbReference>
<dbReference type="SFLD" id="SFLDG01020">
    <property type="entry name" value="Terpene_Cyclase_Like_2"/>
    <property type="match status" value="1"/>
</dbReference>
<dbReference type="SUPFAM" id="SSF48576">
    <property type="entry name" value="Terpenoid synthases"/>
    <property type="match status" value="1"/>
</dbReference>
<name>BTPS2_METBS</name>
<reference key="1">
    <citation type="journal article" date="2014" name="Proc. Natl. Acad. Sci. U.S.A.">
        <title>Trajectory and genomic determinants of fungal-pathogen speciation and host adaptation.</title>
        <authorList>
            <person name="Hu X."/>
            <person name="Xiao G."/>
            <person name="Zheng P."/>
            <person name="Shang Y."/>
            <person name="Su Y."/>
            <person name="Zhang X."/>
            <person name="Liu X."/>
            <person name="Zhan S."/>
            <person name="St Leger R.J."/>
            <person name="Wang C."/>
        </authorList>
    </citation>
    <scope>NUCLEOTIDE SEQUENCE [LARGE SCALE GENOMIC DNA]</scope>
    <source>
        <strain>ARSEF 3297</strain>
    </source>
</reference>
<reference key="2">
    <citation type="journal article" date="2019" name="Sci. Rep.">
        <title>Terpene synthase genes originated from bacteria through horizontal gene transfer contribute to terpenoid diversity in fungi.</title>
        <authorList>
            <person name="Jia Q."/>
            <person name="Chen X."/>
            <person name="Koellner T.G."/>
            <person name="Rinkel J."/>
            <person name="Fu J."/>
            <person name="Labbe J."/>
            <person name="Xiong W."/>
            <person name="Dickschat J.S."/>
            <person name="Gershenzon J."/>
            <person name="Chen F."/>
        </authorList>
    </citation>
    <scope>FUNCTION</scope>
    <scope>CATALYTIC ACTIVITY</scope>
</reference>
<proteinExistence type="evidence at protein level"/>
<organism>
    <name type="scientific">Metarhizium brunneum (strain ARSEF 3297)</name>
    <dbReference type="NCBI Taxonomy" id="1276141"/>
    <lineage>
        <taxon>Eukaryota</taxon>
        <taxon>Fungi</taxon>
        <taxon>Dikarya</taxon>
        <taxon>Ascomycota</taxon>
        <taxon>Pezizomycotina</taxon>
        <taxon>Sordariomycetes</taxon>
        <taxon>Hypocreomycetidae</taxon>
        <taxon>Hypocreales</taxon>
        <taxon>Clavicipitaceae</taxon>
        <taxon>Metarhizium</taxon>
    </lineage>
</organism>
<evidence type="ECO:0000250" key="1">
    <source>
        <dbReference type="UniProtKB" id="B5HDJ6"/>
    </source>
</evidence>
<evidence type="ECO:0000269" key="2">
    <source>
    </source>
</evidence>
<evidence type="ECO:0000303" key="3">
    <source>
    </source>
</evidence>
<evidence type="ECO:0000305" key="4"/>
<gene>
    <name type="ORF">MBR_09977</name>
</gene>
<accession>A0A0B4G3Q7</accession>
<sequence length="342" mass="38824">MEKQILEPQLSALRLPAFNVPWPGARSPHAEVIEARMIEWADHYDLLVNDEHRSRVIRARYGWLAARCYPNAAKELLQVIADYFVWFFLADDLFVDRVETVSGDTLRNLTAMIDVLDFNSAGLEPVWGELAWLDVCRRLRSLLQAEPFERFAQGMRLWATTAGLQILNHIRPKSVGIREYQTIRRHTSGMNPCTALSDAANNGSVKPYEFYQPDVQALVRRANNIVCWANDIQSLGVEIRQPGQFRNMVVIYAEQGGSLQNSVETTAARVDAEISSFLELADAVTARANVTLRGLVDGLKYWIRGYLDWVEHDTLRYVDKFAAVDADDRFLSTPQVASRHSV</sequence>